<evidence type="ECO:0000250" key="1"/>
<evidence type="ECO:0000305" key="2"/>
<reference key="1">
    <citation type="submission" date="1997-01" db="EMBL/GenBank/DDBJ databases">
        <title>Cyanobacterial mutants capable of growing in the presence of high concentration of zinc.</title>
        <authorList>
            <person name="Kirzner S."/>
            <person name="Kaplan A."/>
        </authorList>
    </citation>
    <scope>NUCLEOTIDE SEQUENCE [GENOMIC DNA]</scope>
</reference>
<reference key="2">
    <citation type="submission" date="2005-08" db="EMBL/GenBank/DDBJ databases">
        <title>Complete sequence of chromosome 1 of Synechococcus elongatus PCC 7942.</title>
        <authorList>
            <consortium name="US DOE Joint Genome Institute"/>
            <person name="Copeland A."/>
            <person name="Lucas S."/>
            <person name="Lapidus A."/>
            <person name="Barry K."/>
            <person name="Detter J.C."/>
            <person name="Glavina T."/>
            <person name="Hammon N."/>
            <person name="Israni S."/>
            <person name="Pitluck S."/>
            <person name="Schmutz J."/>
            <person name="Larimer F."/>
            <person name="Land M."/>
            <person name="Kyrpides N."/>
            <person name="Lykidis A."/>
            <person name="Golden S."/>
            <person name="Richardson P."/>
        </authorList>
    </citation>
    <scope>NUCLEOTIDE SEQUENCE [LARGE SCALE GENOMIC DNA]</scope>
    <source>
        <strain>ATCC 33912 / PCC 7942 / FACHB-805</strain>
    </source>
</reference>
<dbReference type="EC" id="1.3.1.98"/>
<dbReference type="EMBL" id="U86147">
    <property type="protein sequence ID" value="AAB47523.1"/>
    <property type="status" value="ALT_FRAME"/>
    <property type="molecule type" value="Genomic_DNA"/>
</dbReference>
<dbReference type="EMBL" id="CP000100">
    <property type="protein sequence ID" value="ABB57770.1"/>
    <property type="molecule type" value="Genomic_DNA"/>
</dbReference>
<dbReference type="RefSeq" id="WP_011244661.1">
    <property type="nucleotide sequence ID" value="NZ_JACJTX010000001.1"/>
</dbReference>
<dbReference type="SMR" id="P95837"/>
<dbReference type="STRING" id="1140.Synpcc7942_1740"/>
<dbReference type="PaxDb" id="1140-Synpcc7942_1740"/>
<dbReference type="GeneID" id="72430611"/>
<dbReference type="KEGG" id="syf:Synpcc7942_1740"/>
<dbReference type="eggNOG" id="COG0812">
    <property type="taxonomic scope" value="Bacteria"/>
</dbReference>
<dbReference type="HOGENOM" id="CLU_035304_1_1_3"/>
<dbReference type="OrthoDB" id="9804753at2"/>
<dbReference type="BioCyc" id="SYNEL:SYNPCC7942_1740-MONOMER"/>
<dbReference type="UniPathway" id="UPA00219"/>
<dbReference type="Proteomes" id="UP000889800">
    <property type="component" value="Chromosome"/>
</dbReference>
<dbReference type="GO" id="GO:0005829">
    <property type="term" value="C:cytosol"/>
    <property type="evidence" value="ECO:0007669"/>
    <property type="project" value="TreeGrafter"/>
</dbReference>
<dbReference type="GO" id="GO:0071949">
    <property type="term" value="F:FAD binding"/>
    <property type="evidence" value="ECO:0007669"/>
    <property type="project" value="InterPro"/>
</dbReference>
<dbReference type="GO" id="GO:0008762">
    <property type="term" value="F:UDP-N-acetylmuramate dehydrogenase activity"/>
    <property type="evidence" value="ECO:0007669"/>
    <property type="project" value="UniProtKB-UniRule"/>
</dbReference>
<dbReference type="GO" id="GO:0051301">
    <property type="term" value="P:cell division"/>
    <property type="evidence" value="ECO:0007669"/>
    <property type="project" value="UniProtKB-KW"/>
</dbReference>
<dbReference type="GO" id="GO:0071555">
    <property type="term" value="P:cell wall organization"/>
    <property type="evidence" value="ECO:0007669"/>
    <property type="project" value="UniProtKB-KW"/>
</dbReference>
<dbReference type="GO" id="GO:0009252">
    <property type="term" value="P:peptidoglycan biosynthetic process"/>
    <property type="evidence" value="ECO:0007669"/>
    <property type="project" value="UniProtKB-UniRule"/>
</dbReference>
<dbReference type="GO" id="GO:0008360">
    <property type="term" value="P:regulation of cell shape"/>
    <property type="evidence" value="ECO:0007669"/>
    <property type="project" value="UniProtKB-KW"/>
</dbReference>
<dbReference type="Gene3D" id="3.30.465.10">
    <property type="match status" value="1"/>
</dbReference>
<dbReference type="Gene3D" id="3.90.78.10">
    <property type="entry name" value="UDP-N-acetylenolpyruvoylglucosamine reductase, C-terminal domain"/>
    <property type="match status" value="1"/>
</dbReference>
<dbReference type="Gene3D" id="3.30.43.10">
    <property type="entry name" value="Uridine Diphospho-n-acetylenolpyruvylglucosamine Reductase, domain 2"/>
    <property type="match status" value="1"/>
</dbReference>
<dbReference type="HAMAP" id="MF_00037">
    <property type="entry name" value="MurB"/>
    <property type="match status" value="1"/>
</dbReference>
<dbReference type="InterPro" id="IPR016166">
    <property type="entry name" value="FAD-bd_PCMH"/>
</dbReference>
<dbReference type="InterPro" id="IPR036318">
    <property type="entry name" value="FAD-bd_PCMH-like_sf"/>
</dbReference>
<dbReference type="InterPro" id="IPR016167">
    <property type="entry name" value="FAD-bd_PCMH_sub1"/>
</dbReference>
<dbReference type="InterPro" id="IPR016169">
    <property type="entry name" value="FAD-bd_PCMH_sub2"/>
</dbReference>
<dbReference type="InterPro" id="IPR003170">
    <property type="entry name" value="MurB"/>
</dbReference>
<dbReference type="InterPro" id="IPR011601">
    <property type="entry name" value="MurB_C"/>
</dbReference>
<dbReference type="InterPro" id="IPR036635">
    <property type="entry name" value="MurB_C_sf"/>
</dbReference>
<dbReference type="InterPro" id="IPR006094">
    <property type="entry name" value="Oxid_FAD_bind_N"/>
</dbReference>
<dbReference type="NCBIfam" id="TIGR00179">
    <property type="entry name" value="murB"/>
    <property type="match status" value="1"/>
</dbReference>
<dbReference type="NCBIfam" id="NF010480">
    <property type="entry name" value="PRK13905.1"/>
    <property type="match status" value="1"/>
</dbReference>
<dbReference type="PANTHER" id="PTHR21071">
    <property type="entry name" value="UDP-N-ACETYLENOLPYRUVOYLGLUCOSAMINE REDUCTASE"/>
    <property type="match status" value="1"/>
</dbReference>
<dbReference type="PANTHER" id="PTHR21071:SF4">
    <property type="entry name" value="UDP-N-ACETYLENOLPYRUVOYLGLUCOSAMINE REDUCTASE"/>
    <property type="match status" value="1"/>
</dbReference>
<dbReference type="Pfam" id="PF01565">
    <property type="entry name" value="FAD_binding_4"/>
    <property type="match status" value="1"/>
</dbReference>
<dbReference type="Pfam" id="PF02873">
    <property type="entry name" value="MurB_C"/>
    <property type="match status" value="1"/>
</dbReference>
<dbReference type="SUPFAM" id="SSF56176">
    <property type="entry name" value="FAD-binding/transporter-associated domain-like"/>
    <property type="match status" value="1"/>
</dbReference>
<dbReference type="SUPFAM" id="SSF56194">
    <property type="entry name" value="Uridine diphospho-N-Acetylenolpyruvylglucosamine reductase, MurB, C-terminal domain"/>
    <property type="match status" value="1"/>
</dbReference>
<dbReference type="PROSITE" id="PS51387">
    <property type="entry name" value="FAD_PCMH"/>
    <property type="match status" value="1"/>
</dbReference>
<feature type="chain" id="PRO_0000179277" description="UDP-N-acetylenolpyruvoylglucosamine reductase">
    <location>
        <begin position="1"/>
        <end position="301"/>
    </location>
</feature>
<feature type="domain" description="FAD-binding PCMH-type">
    <location>
        <begin position="24"/>
        <end position="190"/>
    </location>
</feature>
<feature type="active site" evidence="1">
    <location>
        <position position="169"/>
    </location>
</feature>
<feature type="active site" description="Proton donor" evidence="1">
    <location>
        <position position="220"/>
    </location>
</feature>
<feature type="active site" evidence="1">
    <location>
        <position position="290"/>
    </location>
</feature>
<feature type="sequence conflict" description="In Ref. 1." evidence="2" ref="1">
    <original>V</original>
    <variation>E</variation>
    <location>
        <position position="150"/>
    </location>
</feature>
<feature type="sequence conflict" description="In Ref. 1." evidence="2" ref="1">
    <original>T</original>
    <variation>R</variation>
    <location>
        <position position="152"/>
    </location>
</feature>
<feature type="sequence conflict" description="In Ref. 1; AAB47523." evidence="2" ref="1">
    <original>A</original>
    <variation>P</variation>
    <location>
        <position position="183"/>
    </location>
</feature>
<feature type="sequence conflict" description="In Ref. 1; AAB47523." evidence="2" ref="1">
    <original>L</original>
    <variation>V</variation>
    <location>
        <position position="197"/>
    </location>
</feature>
<feature type="sequence conflict" description="In Ref. 1; AAB47523." evidence="2" ref="1">
    <original>G</original>
    <variation>R</variation>
    <location>
        <position position="280"/>
    </location>
</feature>
<protein>
    <recommendedName>
        <fullName>UDP-N-acetylenolpyruvoylglucosamine reductase</fullName>
        <ecNumber>1.3.1.98</ecNumber>
    </recommendedName>
    <alternativeName>
        <fullName>UDP-N-acetylmuramate dehydrogenase</fullName>
    </alternativeName>
</protein>
<sequence length="301" mass="32347">MTGAVSLLETLQQAVPLAGFTSFRVGGLAQFYDEPASVEAIATAWQWARLADFPVTFLGAGSNLLISDRGLPGLVLNLRRLQGATFDLATGCVEVAAGEPIPRLAWAAARQGWSGLEWAVGIPGTLGGAVVMNAGAQGGCMADILQSVQVITDQGLETWSREQLQYDYRHSVLQTGHACVVSAQLQLQPGFERSQVLTTTSTNFRQRKRTQPYHLPNCGSVFRNPEPQKAGQLIEACGLKGYQIGDAQVSELHANFILNCGAARAQDILSLIRHVQGTVGDHFGVNLHPEVKLLGEFQDVI</sequence>
<proteinExistence type="inferred from homology"/>
<organism>
    <name type="scientific">Synechococcus elongatus (strain ATCC 33912 / PCC 7942 / FACHB-805)</name>
    <name type="common">Anacystis nidulans R2</name>
    <dbReference type="NCBI Taxonomy" id="1140"/>
    <lineage>
        <taxon>Bacteria</taxon>
        <taxon>Bacillati</taxon>
        <taxon>Cyanobacteriota</taxon>
        <taxon>Cyanophyceae</taxon>
        <taxon>Synechococcales</taxon>
        <taxon>Synechococcaceae</taxon>
        <taxon>Synechococcus</taxon>
    </lineage>
</organism>
<gene>
    <name type="primary">murB</name>
    <name type="ordered locus">Synpcc7942_1740</name>
</gene>
<keyword id="KW-0131">Cell cycle</keyword>
<keyword id="KW-0132">Cell division</keyword>
<keyword id="KW-0133">Cell shape</keyword>
<keyword id="KW-0961">Cell wall biogenesis/degradation</keyword>
<keyword id="KW-0963">Cytoplasm</keyword>
<keyword id="KW-0274">FAD</keyword>
<keyword id="KW-0285">Flavoprotein</keyword>
<keyword id="KW-0521">NADP</keyword>
<keyword id="KW-0560">Oxidoreductase</keyword>
<keyword id="KW-0573">Peptidoglycan synthesis</keyword>
<keyword id="KW-1185">Reference proteome</keyword>
<accession>P95837</accession>
<accession>Q31ME9</accession>
<name>MURB_SYNE7</name>
<comment type="function">
    <text evidence="1">Cell wall formation.</text>
</comment>
<comment type="catalytic activity">
    <reaction>
        <text>UDP-N-acetyl-alpha-D-muramate + NADP(+) = UDP-N-acetyl-3-O-(1-carboxyvinyl)-alpha-D-glucosamine + NADPH + H(+)</text>
        <dbReference type="Rhea" id="RHEA:12248"/>
        <dbReference type="ChEBI" id="CHEBI:15378"/>
        <dbReference type="ChEBI" id="CHEBI:57783"/>
        <dbReference type="ChEBI" id="CHEBI:58349"/>
        <dbReference type="ChEBI" id="CHEBI:68483"/>
        <dbReference type="ChEBI" id="CHEBI:70757"/>
        <dbReference type="EC" id="1.3.1.98"/>
    </reaction>
</comment>
<comment type="cofactor">
    <cofactor evidence="1">
        <name>FAD</name>
        <dbReference type="ChEBI" id="CHEBI:57692"/>
    </cofactor>
</comment>
<comment type="pathway">
    <text>Cell wall biogenesis; peptidoglycan biosynthesis.</text>
</comment>
<comment type="subcellular location">
    <subcellularLocation>
        <location evidence="1">Cytoplasm</location>
    </subcellularLocation>
</comment>
<comment type="similarity">
    <text evidence="2">Belongs to the MurB family.</text>
</comment>
<comment type="sequence caution" evidence="2">
    <conflict type="frameshift">
        <sequence resource="EMBL-CDS" id="AAB47523"/>
    </conflict>
</comment>